<dbReference type="EC" id="3.4.17.-"/>
<dbReference type="EMBL" id="GG663363">
    <property type="protein sequence ID" value="EEH10604.1"/>
    <property type="molecule type" value="Genomic_DNA"/>
</dbReference>
<dbReference type="RefSeq" id="XP_045291084.1">
    <property type="nucleotide sequence ID" value="XM_045427109.1"/>
</dbReference>
<dbReference type="SMR" id="C0NAB3"/>
<dbReference type="STRING" id="447093.C0NAB3"/>
<dbReference type="GeneID" id="69033076"/>
<dbReference type="VEuPathDB" id="FungiDB:I7I50_01783"/>
<dbReference type="HOGENOM" id="CLU_021802_3_0_1"/>
<dbReference type="InParanoid" id="C0NAB3"/>
<dbReference type="Proteomes" id="UP000001631">
    <property type="component" value="Unassembled WGS sequence"/>
</dbReference>
<dbReference type="GO" id="GO:0005576">
    <property type="term" value="C:extracellular region"/>
    <property type="evidence" value="ECO:0007669"/>
    <property type="project" value="UniProtKB-SubCell"/>
</dbReference>
<dbReference type="GO" id="GO:0046872">
    <property type="term" value="F:metal ion binding"/>
    <property type="evidence" value="ECO:0007669"/>
    <property type="project" value="UniProtKB-KW"/>
</dbReference>
<dbReference type="GO" id="GO:0008233">
    <property type="term" value="F:peptidase activity"/>
    <property type="evidence" value="ECO:0007669"/>
    <property type="project" value="UniProtKB-KW"/>
</dbReference>
<dbReference type="GO" id="GO:0006508">
    <property type="term" value="P:proteolysis"/>
    <property type="evidence" value="ECO:0007669"/>
    <property type="project" value="UniProtKB-KW"/>
</dbReference>
<dbReference type="CDD" id="cd05652">
    <property type="entry name" value="M20_ArgE_DapE-like_fungal"/>
    <property type="match status" value="1"/>
</dbReference>
<dbReference type="Gene3D" id="3.30.70.360">
    <property type="match status" value="1"/>
</dbReference>
<dbReference type="Gene3D" id="3.40.630.10">
    <property type="entry name" value="Zn peptidases"/>
    <property type="match status" value="1"/>
</dbReference>
<dbReference type="InterPro" id="IPR036264">
    <property type="entry name" value="Bact_exopeptidase_dim_dom"/>
</dbReference>
<dbReference type="InterPro" id="IPR002933">
    <property type="entry name" value="Peptidase_M20"/>
</dbReference>
<dbReference type="InterPro" id="IPR011650">
    <property type="entry name" value="Peptidase_M20_dimer"/>
</dbReference>
<dbReference type="InterPro" id="IPR050072">
    <property type="entry name" value="Peptidase_M20A"/>
</dbReference>
<dbReference type="PANTHER" id="PTHR43808">
    <property type="entry name" value="ACETYLORNITHINE DEACETYLASE"/>
    <property type="match status" value="1"/>
</dbReference>
<dbReference type="PANTHER" id="PTHR43808:SF8">
    <property type="entry name" value="PEPTIDASE M20 DIMERISATION DOMAIN-CONTAINING PROTEIN"/>
    <property type="match status" value="1"/>
</dbReference>
<dbReference type="Pfam" id="PF07687">
    <property type="entry name" value="M20_dimer"/>
    <property type="match status" value="1"/>
</dbReference>
<dbReference type="Pfam" id="PF01546">
    <property type="entry name" value="Peptidase_M20"/>
    <property type="match status" value="1"/>
</dbReference>
<dbReference type="SUPFAM" id="SSF55031">
    <property type="entry name" value="Bacterial exopeptidase dimerisation domain"/>
    <property type="match status" value="1"/>
</dbReference>
<dbReference type="SUPFAM" id="SSF53187">
    <property type="entry name" value="Zn-dependent exopeptidases"/>
    <property type="match status" value="1"/>
</dbReference>
<gene>
    <name type="ORF">HCBG_00059</name>
</gene>
<keyword id="KW-0325">Glycoprotein</keyword>
<keyword id="KW-0378">Hydrolase</keyword>
<keyword id="KW-0479">Metal-binding</keyword>
<keyword id="KW-0645">Protease</keyword>
<keyword id="KW-1185">Reference proteome</keyword>
<keyword id="KW-0964">Secreted</keyword>
<keyword id="KW-0732">Signal</keyword>
<keyword id="KW-0862">Zinc</keyword>
<sequence length="437" mass="46419">MKLSNLAALLSASTVAPVAAGYVSQDIIRADTMNVAVAAAANAQDEDLLEKIISSSPLLSLHRTICQVESVSNHESAVGEALIKYLGENGFATEKQMVPVDEDDDSTDKRFNIWAYPEGSPKPKIILTSHIDTVPPHIDYNLQAPEGDFDRANITIKGRGTVDAKASVAAMIIAALGHLKEHPDVPLGLLFVVSEEKGGTGMVHFSDSDLNTTPPFFHTLIFGEPTELKLVDGHKGNLRFDVEARGVSAHSGYPWLGHSAISEILPVLERIDKLGDIPVKDGGLPASEKYGRTTLNIGMLKGGAAGNVVPESASASVAVRLAAGTIEDAQNIIRKAVADACGGSKNITITFPDSKAYPPVDLDTDVDGFELLTVNYGTDIPKLDIHDEDSDVKVKRYLYGPGTILVAHGADEALTVGDLEKAVKGYAKLIDAAVRRG</sequence>
<feature type="signal peptide" evidence="2">
    <location>
        <begin position="1"/>
        <end position="20"/>
    </location>
</feature>
<feature type="chain" id="PRO_0000411221" description="Probable carboxypeptidase HCBG_00059">
    <location>
        <begin position="21"/>
        <end position="437"/>
    </location>
</feature>
<feature type="active site" description="Proton acceptor" evidence="1">
    <location>
        <position position="195"/>
    </location>
</feature>
<feature type="binding site" evidence="1">
    <location>
        <position position="163"/>
    </location>
    <ligand>
        <name>Zn(2+)</name>
        <dbReference type="ChEBI" id="CHEBI:29105"/>
        <label>1</label>
    </ligand>
</feature>
<feature type="binding site" evidence="1">
    <location>
        <position position="163"/>
    </location>
    <ligand>
        <name>Zn(2+)</name>
        <dbReference type="ChEBI" id="CHEBI:29105"/>
        <label>2</label>
    </ligand>
</feature>
<feature type="binding site" evidence="1">
    <location>
        <position position="196"/>
    </location>
    <ligand>
        <name>Zn(2+)</name>
        <dbReference type="ChEBI" id="CHEBI:29105"/>
        <label>1</label>
    </ligand>
</feature>
<feature type="glycosylation site" description="N-linked (GlcNAc...) asparagine" evidence="2">
    <location>
        <position position="153"/>
    </location>
</feature>
<feature type="glycosylation site" description="N-linked (GlcNAc...) asparagine" evidence="2">
    <location>
        <position position="346"/>
    </location>
</feature>
<comment type="cofactor">
    <cofactor evidence="1">
        <name>Zn(2+)</name>
        <dbReference type="ChEBI" id="CHEBI:29105"/>
    </cofactor>
    <text evidence="1">Binds 2 Zn(2+) ions per subunit.</text>
</comment>
<comment type="subcellular location">
    <subcellularLocation>
        <location evidence="3">Secreted</location>
    </subcellularLocation>
</comment>
<comment type="similarity">
    <text evidence="3">Belongs to the peptidase M20A family.</text>
</comment>
<proteinExistence type="inferred from homology"/>
<name>P20D1_AJECG</name>
<protein>
    <recommendedName>
        <fullName>Probable carboxypeptidase HCBG_00059</fullName>
        <ecNumber>3.4.17.-</ecNumber>
    </recommendedName>
    <alternativeName>
        <fullName>Peptidase M20 domain-containing protein HCBG_00059</fullName>
    </alternativeName>
</protein>
<reference key="1">
    <citation type="submission" date="2009-02" db="EMBL/GenBank/DDBJ databases">
        <title>The genome sequence of Ajellomyces capsulatus strain G186AR.</title>
        <authorList>
            <person name="Champion M."/>
            <person name="Cuomo C.A."/>
            <person name="Ma L.-J."/>
            <person name="Henn M.R."/>
            <person name="Sil A."/>
            <person name="Goldman B."/>
            <person name="Young S.K."/>
            <person name="Kodira C.D."/>
            <person name="Zeng Q."/>
            <person name="Koehrsen M."/>
            <person name="Alvarado L."/>
            <person name="Berlin A."/>
            <person name="Borenstein D."/>
            <person name="Chen Z."/>
            <person name="Engels R."/>
            <person name="Freedman E."/>
            <person name="Gellesch M."/>
            <person name="Goldberg J."/>
            <person name="Griggs A."/>
            <person name="Gujja S."/>
            <person name="Heiman D."/>
            <person name="Hepburn T."/>
            <person name="Howarth C."/>
            <person name="Jen D."/>
            <person name="Larson L."/>
            <person name="Lewis B."/>
            <person name="Mehta T."/>
            <person name="Park D."/>
            <person name="Pearson M."/>
            <person name="Roberts A."/>
            <person name="Saif S."/>
            <person name="Shea T."/>
            <person name="Shenoy N."/>
            <person name="Sisk P."/>
            <person name="Stolte C."/>
            <person name="Sykes S."/>
            <person name="Walk T."/>
            <person name="White J."/>
            <person name="Yandava C."/>
            <person name="Klein B."/>
            <person name="McEwen J.G."/>
            <person name="Puccia R."/>
            <person name="Goldman G.H."/>
            <person name="Felipe M.S."/>
            <person name="Nino-Vega G."/>
            <person name="San-Blas G."/>
            <person name="Taylor J."/>
            <person name="Mendoza L."/>
            <person name="Galagan J.E."/>
            <person name="Nusbaum C."/>
            <person name="Birren B.W."/>
        </authorList>
    </citation>
    <scope>NUCLEOTIDE SEQUENCE [LARGE SCALE GENOMIC DNA]</scope>
    <source>
        <strain>G186AR / H82 / ATCC MYA-2454 / RMSCC 2432</strain>
    </source>
</reference>
<accession>C0NAB3</accession>
<evidence type="ECO:0000250" key="1"/>
<evidence type="ECO:0000255" key="2"/>
<evidence type="ECO:0000305" key="3"/>
<organism>
    <name type="scientific">Ajellomyces capsulatus (strain G186AR / H82 / ATCC MYA-2454 / RMSCC 2432)</name>
    <name type="common">Darling's disease fungus</name>
    <name type="synonym">Histoplasma capsulatum</name>
    <dbReference type="NCBI Taxonomy" id="447093"/>
    <lineage>
        <taxon>Eukaryota</taxon>
        <taxon>Fungi</taxon>
        <taxon>Dikarya</taxon>
        <taxon>Ascomycota</taxon>
        <taxon>Pezizomycotina</taxon>
        <taxon>Eurotiomycetes</taxon>
        <taxon>Eurotiomycetidae</taxon>
        <taxon>Onygenales</taxon>
        <taxon>Ajellomycetaceae</taxon>
        <taxon>Histoplasma</taxon>
    </lineage>
</organism>